<dbReference type="EC" id="4.2.1.10" evidence="1"/>
<dbReference type="EMBL" id="CP000462">
    <property type="protein sequence ID" value="ABK37591.1"/>
    <property type="molecule type" value="Genomic_DNA"/>
</dbReference>
<dbReference type="RefSeq" id="WP_011707111.1">
    <property type="nucleotide sequence ID" value="NC_008570.1"/>
</dbReference>
<dbReference type="RefSeq" id="YP_857834.1">
    <property type="nucleotide sequence ID" value="NC_008570.1"/>
</dbReference>
<dbReference type="SMR" id="A0KNI3"/>
<dbReference type="STRING" id="380703.AHA_3345"/>
<dbReference type="EnsemblBacteria" id="ABK37591">
    <property type="protein sequence ID" value="ABK37591"/>
    <property type="gene ID" value="AHA_3345"/>
</dbReference>
<dbReference type="GeneID" id="4490125"/>
<dbReference type="KEGG" id="aha:AHA_3345"/>
<dbReference type="PATRIC" id="fig|380703.7.peg.3341"/>
<dbReference type="eggNOG" id="COG0757">
    <property type="taxonomic scope" value="Bacteria"/>
</dbReference>
<dbReference type="HOGENOM" id="CLU_090968_1_0_6"/>
<dbReference type="OrthoDB" id="9790793at2"/>
<dbReference type="UniPathway" id="UPA00053">
    <property type="reaction ID" value="UER00086"/>
</dbReference>
<dbReference type="Proteomes" id="UP000000756">
    <property type="component" value="Chromosome"/>
</dbReference>
<dbReference type="GO" id="GO:0003855">
    <property type="term" value="F:3-dehydroquinate dehydratase activity"/>
    <property type="evidence" value="ECO:0007669"/>
    <property type="project" value="UniProtKB-UniRule"/>
</dbReference>
<dbReference type="GO" id="GO:0008652">
    <property type="term" value="P:amino acid biosynthetic process"/>
    <property type="evidence" value="ECO:0007669"/>
    <property type="project" value="UniProtKB-KW"/>
</dbReference>
<dbReference type="GO" id="GO:0009073">
    <property type="term" value="P:aromatic amino acid family biosynthetic process"/>
    <property type="evidence" value="ECO:0007669"/>
    <property type="project" value="UniProtKB-KW"/>
</dbReference>
<dbReference type="GO" id="GO:0009423">
    <property type="term" value="P:chorismate biosynthetic process"/>
    <property type="evidence" value="ECO:0007669"/>
    <property type="project" value="UniProtKB-UniRule"/>
</dbReference>
<dbReference type="GO" id="GO:0019631">
    <property type="term" value="P:quinate catabolic process"/>
    <property type="evidence" value="ECO:0007669"/>
    <property type="project" value="TreeGrafter"/>
</dbReference>
<dbReference type="CDD" id="cd00466">
    <property type="entry name" value="DHQase_II"/>
    <property type="match status" value="1"/>
</dbReference>
<dbReference type="Gene3D" id="3.40.50.9100">
    <property type="entry name" value="Dehydroquinase, class II"/>
    <property type="match status" value="1"/>
</dbReference>
<dbReference type="HAMAP" id="MF_00169">
    <property type="entry name" value="AroQ"/>
    <property type="match status" value="1"/>
</dbReference>
<dbReference type="InterPro" id="IPR001874">
    <property type="entry name" value="DHquinase_II"/>
</dbReference>
<dbReference type="InterPro" id="IPR018509">
    <property type="entry name" value="DHquinase_II_CS"/>
</dbReference>
<dbReference type="InterPro" id="IPR036441">
    <property type="entry name" value="DHquinase_II_sf"/>
</dbReference>
<dbReference type="NCBIfam" id="TIGR01088">
    <property type="entry name" value="aroQ"/>
    <property type="match status" value="1"/>
</dbReference>
<dbReference type="NCBIfam" id="NF003804">
    <property type="entry name" value="PRK05395.1-1"/>
    <property type="match status" value="1"/>
</dbReference>
<dbReference type="NCBIfam" id="NF003805">
    <property type="entry name" value="PRK05395.1-2"/>
    <property type="match status" value="1"/>
</dbReference>
<dbReference type="NCBIfam" id="NF003806">
    <property type="entry name" value="PRK05395.1-3"/>
    <property type="match status" value="1"/>
</dbReference>
<dbReference type="NCBIfam" id="NF003807">
    <property type="entry name" value="PRK05395.1-4"/>
    <property type="match status" value="1"/>
</dbReference>
<dbReference type="PANTHER" id="PTHR21272">
    <property type="entry name" value="CATABOLIC 3-DEHYDROQUINASE"/>
    <property type="match status" value="1"/>
</dbReference>
<dbReference type="PANTHER" id="PTHR21272:SF3">
    <property type="entry name" value="CATABOLIC 3-DEHYDROQUINASE"/>
    <property type="match status" value="1"/>
</dbReference>
<dbReference type="Pfam" id="PF01220">
    <property type="entry name" value="DHquinase_II"/>
    <property type="match status" value="1"/>
</dbReference>
<dbReference type="PIRSF" id="PIRSF001399">
    <property type="entry name" value="DHquinase_II"/>
    <property type="match status" value="1"/>
</dbReference>
<dbReference type="SUPFAM" id="SSF52304">
    <property type="entry name" value="Type II 3-dehydroquinate dehydratase"/>
    <property type="match status" value="1"/>
</dbReference>
<dbReference type="PROSITE" id="PS01029">
    <property type="entry name" value="DEHYDROQUINASE_II"/>
    <property type="match status" value="1"/>
</dbReference>
<gene>
    <name evidence="1" type="primary">aroQ</name>
    <name type="ordered locus">AHA_3345</name>
</gene>
<protein>
    <recommendedName>
        <fullName evidence="1">3-dehydroquinate dehydratase</fullName>
        <shortName evidence="1">3-dehydroquinase</shortName>
        <ecNumber evidence="1">4.2.1.10</ecNumber>
    </recommendedName>
    <alternativeName>
        <fullName evidence="1">Type II DHQase</fullName>
    </alternativeName>
</protein>
<reference key="1">
    <citation type="journal article" date="2006" name="J. Bacteriol.">
        <title>Genome sequence of Aeromonas hydrophila ATCC 7966T: jack of all trades.</title>
        <authorList>
            <person name="Seshadri R."/>
            <person name="Joseph S.W."/>
            <person name="Chopra A.K."/>
            <person name="Sha J."/>
            <person name="Shaw J."/>
            <person name="Graf J."/>
            <person name="Haft D.H."/>
            <person name="Wu M."/>
            <person name="Ren Q."/>
            <person name="Rosovitz M.J."/>
            <person name="Madupu R."/>
            <person name="Tallon L."/>
            <person name="Kim M."/>
            <person name="Jin S."/>
            <person name="Vuong H."/>
            <person name="Stine O.C."/>
            <person name="Ali A."/>
            <person name="Horneman A.J."/>
            <person name="Heidelberg J.F."/>
        </authorList>
    </citation>
    <scope>NUCLEOTIDE SEQUENCE [LARGE SCALE GENOMIC DNA]</scope>
    <source>
        <strain>ATCC 7966 / DSM 30187 / BCRC 13018 / CCUG 14551 / JCM 1027 / KCTC 2358 / NCIMB 9240 / NCTC 8049</strain>
    </source>
</reference>
<accession>A0KNI3</accession>
<organism>
    <name type="scientific">Aeromonas hydrophila subsp. hydrophila (strain ATCC 7966 / DSM 30187 / BCRC 13018 / CCUG 14551 / JCM 1027 / KCTC 2358 / NCIMB 9240 / NCTC 8049)</name>
    <dbReference type="NCBI Taxonomy" id="380703"/>
    <lineage>
        <taxon>Bacteria</taxon>
        <taxon>Pseudomonadati</taxon>
        <taxon>Pseudomonadota</taxon>
        <taxon>Gammaproteobacteria</taxon>
        <taxon>Aeromonadales</taxon>
        <taxon>Aeromonadaceae</taxon>
        <taxon>Aeromonas</taxon>
    </lineage>
</organism>
<proteinExistence type="inferred from homology"/>
<comment type="function">
    <text evidence="1">Catalyzes a trans-dehydration via an enolate intermediate.</text>
</comment>
<comment type="catalytic activity">
    <reaction evidence="1">
        <text>3-dehydroquinate = 3-dehydroshikimate + H2O</text>
        <dbReference type="Rhea" id="RHEA:21096"/>
        <dbReference type="ChEBI" id="CHEBI:15377"/>
        <dbReference type="ChEBI" id="CHEBI:16630"/>
        <dbReference type="ChEBI" id="CHEBI:32364"/>
        <dbReference type="EC" id="4.2.1.10"/>
    </reaction>
</comment>
<comment type="pathway">
    <text evidence="1">Metabolic intermediate biosynthesis; chorismate biosynthesis; chorismate from D-erythrose 4-phosphate and phosphoenolpyruvate: step 3/7.</text>
</comment>
<comment type="subunit">
    <text evidence="1">Homododecamer.</text>
</comment>
<comment type="similarity">
    <text evidence="1">Belongs to the type-II 3-dehydroquinase family.</text>
</comment>
<feature type="chain" id="PRO_1000023447" description="3-dehydroquinate dehydratase">
    <location>
        <begin position="1"/>
        <end position="149"/>
    </location>
</feature>
<feature type="active site" description="Proton acceptor" evidence="1">
    <location>
        <position position="26"/>
    </location>
</feature>
<feature type="active site" description="Proton donor" evidence="1">
    <location>
        <position position="103"/>
    </location>
</feature>
<feature type="binding site" evidence="1">
    <location>
        <position position="77"/>
    </location>
    <ligand>
        <name>substrate</name>
    </ligand>
</feature>
<feature type="binding site" evidence="1">
    <location>
        <position position="83"/>
    </location>
    <ligand>
        <name>substrate</name>
    </ligand>
</feature>
<feature type="binding site" evidence="1">
    <location>
        <position position="90"/>
    </location>
    <ligand>
        <name>substrate</name>
    </ligand>
</feature>
<feature type="binding site" evidence="1">
    <location>
        <begin position="104"/>
        <end position="105"/>
    </location>
    <ligand>
        <name>substrate</name>
    </ligand>
</feature>
<feature type="binding site" evidence="1">
    <location>
        <position position="114"/>
    </location>
    <ligand>
        <name>substrate</name>
    </ligand>
</feature>
<feature type="site" description="Transition state stabilizer" evidence="1">
    <location>
        <position position="21"/>
    </location>
</feature>
<evidence type="ECO:0000255" key="1">
    <source>
        <dbReference type="HAMAP-Rule" id="MF_00169"/>
    </source>
</evidence>
<sequence>MSQKHRILLLNGPNLNLLGKREPGIYGSKTLDEIVADLTHNADELGVTLEHLQSNAEHELVGRIHQAMGQVDFIIINPAAFTHTSVAIRDALLGVAIPFIEVHLSNVHAREPFRHHSYLSDVAKGVICGLGADGYQFALTAAVHQLRAA</sequence>
<keyword id="KW-0028">Amino-acid biosynthesis</keyword>
<keyword id="KW-0057">Aromatic amino acid biosynthesis</keyword>
<keyword id="KW-0456">Lyase</keyword>
<keyword id="KW-1185">Reference proteome</keyword>
<name>AROQ_AERHH</name>